<dbReference type="EC" id="3.1.1.96" evidence="1"/>
<dbReference type="EMBL" id="CP000057">
    <property type="protein sequence ID" value="AAX87701.1"/>
    <property type="molecule type" value="Genomic_DNA"/>
</dbReference>
<dbReference type="RefSeq" id="WP_005650818.1">
    <property type="nucleotide sequence ID" value="NC_007146.2"/>
</dbReference>
<dbReference type="SMR" id="Q4QMP6"/>
<dbReference type="GeneID" id="93219669"/>
<dbReference type="KEGG" id="hit:NTHI0792"/>
<dbReference type="HOGENOM" id="CLU_076901_1_1_6"/>
<dbReference type="Proteomes" id="UP000002525">
    <property type="component" value="Chromosome"/>
</dbReference>
<dbReference type="GO" id="GO:0005737">
    <property type="term" value="C:cytoplasm"/>
    <property type="evidence" value="ECO:0007669"/>
    <property type="project" value="UniProtKB-SubCell"/>
</dbReference>
<dbReference type="GO" id="GO:0051500">
    <property type="term" value="F:D-tyrosyl-tRNA(Tyr) deacylase activity"/>
    <property type="evidence" value="ECO:0007669"/>
    <property type="project" value="TreeGrafter"/>
</dbReference>
<dbReference type="GO" id="GO:0106026">
    <property type="term" value="F:Gly-tRNA(Ala) deacylase activity"/>
    <property type="evidence" value="ECO:0007669"/>
    <property type="project" value="UniProtKB-UniRule"/>
</dbReference>
<dbReference type="GO" id="GO:0043908">
    <property type="term" value="F:Ser(Gly)-tRNA(Ala) hydrolase activity"/>
    <property type="evidence" value="ECO:0007669"/>
    <property type="project" value="UniProtKB-UniRule"/>
</dbReference>
<dbReference type="GO" id="GO:0000049">
    <property type="term" value="F:tRNA binding"/>
    <property type="evidence" value="ECO:0007669"/>
    <property type="project" value="UniProtKB-UniRule"/>
</dbReference>
<dbReference type="GO" id="GO:0019478">
    <property type="term" value="P:D-amino acid catabolic process"/>
    <property type="evidence" value="ECO:0007669"/>
    <property type="project" value="UniProtKB-UniRule"/>
</dbReference>
<dbReference type="CDD" id="cd00563">
    <property type="entry name" value="Dtyr_deacylase"/>
    <property type="match status" value="1"/>
</dbReference>
<dbReference type="FunFam" id="3.50.80.10:FF:000001">
    <property type="entry name" value="D-aminoacyl-tRNA deacylase"/>
    <property type="match status" value="1"/>
</dbReference>
<dbReference type="Gene3D" id="3.50.80.10">
    <property type="entry name" value="D-tyrosyl-tRNA(Tyr) deacylase"/>
    <property type="match status" value="1"/>
</dbReference>
<dbReference type="HAMAP" id="MF_00518">
    <property type="entry name" value="Deacylase_Dtd"/>
    <property type="match status" value="1"/>
</dbReference>
<dbReference type="InterPro" id="IPR003732">
    <property type="entry name" value="Daa-tRNA_deacyls_DTD"/>
</dbReference>
<dbReference type="InterPro" id="IPR023509">
    <property type="entry name" value="DTD-like_sf"/>
</dbReference>
<dbReference type="NCBIfam" id="TIGR00256">
    <property type="entry name" value="D-aminoacyl-tRNA deacylase"/>
    <property type="match status" value="1"/>
</dbReference>
<dbReference type="PANTHER" id="PTHR10472:SF5">
    <property type="entry name" value="D-AMINOACYL-TRNA DEACYLASE 1"/>
    <property type="match status" value="1"/>
</dbReference>
<dbReference type="PANTHER" id="PTHR10472">
    <property type="entry name" value="D-TYROSYL-TRNA TYR DEACYLASE"/>
    <property type="match status" value="1"/>
</dbReference>
<dbReference type="Pfam" id="PF02580">
    <property type="entry name" value="Tyr_Deacylase"/>
    <property type="match status" value="1"/>
</dbReference>
<dbReference type="SUPFAM" id="SSF69500">
    <property type="entry name" value="DTD-like"/>
    <property type="match status" value="1"/>
</dbReference>
<accession>Q4QMP6</accession>
<sequence>MIALIQRVSQAKVNVKGETIGKIGKGLLVLLGVEKEDNREKADKLAEKVLNYRIFSDENDKMNLNVQQAQGELLIVSQFTLAADTQKGLRPSFSKGASPALANELYEYFIQKCAEKLPVSTGQFAADMQVSLTNDGPVTFWLNV</sequence>
<evidence type="ECO:0000255" key="1">
    <source>
        <dbReference type="HAMAP-Rule" id="MF_00518"/>
    </source>
</evidence>
<proteinExistence type="inferred from homology"/>
<protein>
    <recommendedName>
        <fullName evidence="1">D-aminoacyl-tRNA deacylase</fullName>
        <shortName evidence="1">DTD</shortName>
        <ecNumber evidence="1">3.1.1.96</ecNumber>
    </recommendedName>
    <alternativeName>
        <fullName evidence="1">Gly-tRNA(Ala) deacylase</fullName>
    </alternativeName>
</protein>
<comment type="function">
    <text evidence="1">An aminoacyl-tRNA editing enzyme that deacylates mischarged D-aminoacyl-tRNAs. Also deacylates mischarged glycyl-tRNA(Ala), protecting cells against glycine mischarging by AlaRS. Acts via tRNA-based rather than protein-based catalysis; rejects L-amino acids rather than detecting D-amino acids in the active site. By recycling D-aminoacyl-tRNA to D-amino acids and free tRNA molecules, this enzyme counteracts the toxicity associated with the formation of D-aminoacyl-tRNA entities in vivo and helps enforce protein L-homochirality.</text>
</comment>
<comment type="catalytic activity">
    <reaction evidence="1">
        <text>glycyl-tRNA(Ala) + H2O = tRNA(Ala) + glycine + H(+)</text>
        <dbReference type="Rhea" id="RHEA:53744"/>
        <dbReference type="Rhea" id="RHEA-COMP:9657"/>
        <dbReference type="Rhea" id="RHEA-COMP:13640"/>
        <dbReference type="ChEBI" id="CHEBI:15377"/>
        <dbReference type="ChEBI" id="CHEBI:15378"/>
        <dbReference type="ChEBI" id="CHEBI:57305"/>
        <dbReference type="ChEBI" id="CHEBI:78442"/>
        <dbReference type="ChEBI" id="CHEBI:78522"/>
        <dbReference type="EC" id="3.1.1.96"/>
    </reaction>
</comment>
<comment type="catalytic activity">
    <reaction evidence="1">
        <text>a D-aminoacyl-tRNA + H2O = a tRNA + a D-alpha-amino acid + H(+)</text>
        <dbReference type="Rhea" id="RHEA:13953"/>
        <dbReference type="Rhea" id="RHEA-COMP:10123"/>
        <dbReference type="Rhea" id="RHEA-COMP:10124"/>
        <dbReference type="ChEBI" id="CHEBI:15377"/>
        <dbReference type="ChEBI" id="CHEBI:15378"/>
        <dbReference type="ChEBI" id="CHEBI:59871"/>
        <dbReference type="ChEBI" id="CHEBI:78442"/>
        <dbReference type="ChEBI" id="CHEBI:79333"/>
        <dbReference type="EC" id="3.1.1.96"/>
    </reaction>
</comment>
<comment type="subunit">
    <text evidence="1">Homodimer.</text>
</comment>
<comment type="subcellular location">
    <subcellularLocation>
        <location evidence="1">Cytoplasm</location>
    </subcellularLocation>
</comment>
<comment type="domain">
    <text evidence="1">A Gly-cisPro motif from one monomer fits into the active site of the other monomer to allow specific chiral rejection of L-amino acids.</text>
</comment>
<comment type="similarity">
    <text evidence="1">Belongs to the DTD family.</text>
</comment>
<keyword id="KW-0963">Cytoplasm</keyword>
<keyword id="KW-0378">Hydrolase</keyword>
<keyword id="KW-0694">RNA-binding</keyword>
<keyword id="KW-0820">tRNA-binding</keyword>
<gene>
    <name evidence="1" type="primary">dtd</name>
    <name type="ordered locus">NTHI0792</name>
</gene>
<name>DTD_HAEI8</name>
<feature type="chain" id="PRO_0000259285" description="D-aminoacyl-tRNA deacylase">
    <location>
        <begin position="1"/>
        <end position="144"/>
    </location>
</feature>
<feature type="short sequence motif" description="Gly-cisPro motif, important for rejection of L-amino acids" evidence="1">
    <location>
        <begin position="136"/>
        <end position="137"/>
    </location>
</feature>
<organism>
    <name type="scientific">Haemophilus influenzae (strain 86-028NP)</name>
    <dbReference type="NCBI Taxonomy" id="281310"/>
    <lineage>
        <taxon>Bacteria</taxon>
        <taxon>Pseudomonadati</taxon>
        <taxon>Pseudomonadota</taxon>
        <taxon>Gammaproteobacteria</taxon>
        <taxon>Pasteurellales</taxon>
        <taxon>Pasteurellaceae</taxon>
        <taxon>Haemophilus</taxon>
    </lineage>
</organism>
<reference key="1">
    <citation type="journal article" date="2005" name="J. Bacteriol.">
        <title>Genomic sequence of an otitis media isolate of nontypeable Haemophilus influenzae: comparative study with H. influenzae serotype d, strain KW20.</title>
        <authorList>
            <person name="Harrison A."/>
            <person name="Dyer D.W."/>
            <person name="Gillaspy A."/>
            <person name="Ray W.C."/>
            <person name="Mungur R."/>
            <person name="Carson M.B."/>
            <person name="Zhong H."/>
            <person name="Gipson J."/>
            <person name="Gipson M."/>
            <person name="Johnson L.S."/>
            <person name="Lewis L."/>
            <person name="Bakaletz L.O."/>
            <person name="Munson R.S. Jr."/>
        </authorList>
    </citation>
    <scope>NUCLEOTIDE SEQUENCE [LARGE SCALE GENOMIC DNA]</scope>
    <source>
        <strain>86-028NP</strain>
    </source>
</reference>